<comment type="function">
    <text evidence="1">Catalyzes the conversion of uracil and 5-phospho-alpha-D-ribose 1-diphosphate (PRPP) to UMP and diphosphate.</text>
</comment>
<comment type="catalytic activity">
    <reaction evidence="1">
        <text>UMP + diphosphate = 5-phospho-alpha-D-ribose 1-diphosphate + uracil</text>
        <dbReference type="Rhea" id="RHEA:13017"/>
        <dbReference type="ChEBI" id="CHEBI:17568"/>
        <dbReference type="ChEBI" id="CHEBI:33019"/>
        <dbReference type="ChEBI" id="CHEBI:57865"/>
        <dbReference type="ChEBI" id="CHEBI:58017"/>
        <dbReference type="EC" id="2.4.2.9"/>
    </reaction>
</comment>
<comment type="cofactor">
    <cofactor evidence="1">
        <name>Mg(2+)</name>
        <dbReference type="ChEBI" id="CHEBI:18420"/>
    </cofactor>
    <text evidence="1">Binds 1 Mg(2+) ion per subunit. The magnesium is bound as Mg-PRPP.</text>
</comment>
<comment type="activity regulation">
    <text evidence="1">Allosterically activated by GTP.</text>
</comment>
<comment type="pathway">
    <text evidence="1">Pyrimidine metabolism; UMP biosynthesis via salvage pathway; UMP from uracil: step 1/1.</text>
</comment>
<comment type="similarity">
    <text evidence="1">Belongs to the UPRTase family.</text>
</comment>
<name>UPP_ACTP2</name>
<reference key="1">
    <citation type="journal article" date="2008" name="J. Bacteriol.">
        <title>The complete genome sequence of Actinobacillus pleuropneumoniae L20 (serotype 5b).</title>
        <authorList>
            <person name="Foote S.J."/>
            <person name="Bosse J.T."/>
            <person name="Bouevitch A.B."/>
            <person name="Langford P.R."/>
            <person name="Young N.M."/>
            <person name="Nash J.H.E."/>
        </authorList>
    </citation>
    <scope>NUCLEOTIDE SEQUENCE [LARGE SCALE GENOMIC DNA]</scope>
    <source>
        <strain>L20</strain>
    </source>
</reference>
<keyword id="KW-0021">Allosteric enzyme</keyword>
<keyword id="KW-0328">Glycosyltransferase</keyword>
<keyword id="KW-0342">GTP-binding</keyword>
<keyword id="KW-0460">Magnesium</keyword>
<keyword id="KW-0547">Nucleotide-binding</keyword>
<keyword id="KW-1185">Reference proteome</keyword>
<keyword id="KW-0808">Transferase</keyword>
<sequence length="208" mass="22508">MKIVEVKHPLVKHKLGLMRAADINTKDFRALATEVGSLLTYEATTDLETEAIEIDGWCGKVEVERIKGKKVTVVPILRAGLGMMDGVLEHIPSARISVVGIYRNEETLEPVPYFTKLANDVEERLAIIVDPMLATGGSMIATIDLLKKAGCKQIKVLVLVAAPEGIKALEAAHPDVELYTASIDSHLNEHGYIVPGLGDAGDKIFGTK</sequence>
<gene>
    <name evidence="1" type="primary">upp</name>
    <name type="ordered locus">APL_0398</name>
</gene>
<protein>
    <recommendedName>
        <fullName evidence="1">Uracil phosphoribosyltransferase</fullName>
        <ecNumber evidence="1">2.4.2.9</ecNumber>
    </recommendedName>
    <alternativeName>
        <fullName evidence="1">UMP pyrophosphorylase</fullName>
    </alternativeName>
    <alternativeName>
        <fullName evidence="1">UPRTase</fullName>
    </alternativeName>
</protein>
<organism>
    <name type="scientific">Actinobacillus pleuropneumoniae serotype 5b (strain L20)</name>
    <dbReference type="NCBI Taxonomy" id="416269"/>
    <lineage>
        <taxon>Bacteria</taxon>
        <taxon>Pseudomonadati</taxon>
        <taxon>Pseudomonadota</taxon>
        <taxon>Gammaproteobacteria</taxon>
        <taxon>Pasteurellales</taxon>
        <taxon>Pasteurellaceae</taxon>
        <taxon>Actinobacillus</taxon>
    </lineage>
</organism>
<proteinExistence type="inferred from homology"/>
<evidence type="ECO:0000255" key="1">
    <source>
        <dbReference type="HAMAP-Rule" id="MF_01218"/>
    </source>
</evidence>
<feature type="chain" id="PRO_1000053670" description="Uracil phosphoribosyltransferase">
    <location>
        <begin position="1"/>
        <end position="208"/>
    </location>
</feature>
<feature type="binding site" evidence="1">
    <location>
        <position position="78"/>
    </location>
    <ligand>
        <name>5-phospho-alpha-D-ribose 1-diphosphate</name>
        <dbReference type="ChEBI" id="CHEBI:58017"/>
    </ligand>
</feature>
<feature type="binding site" evidence="1">
    <location>
        <position position="103"/>
    </location>
    <ligand>
        <name>5-phospho-alpha-D-ribose 1-diphosphate</name>
        <dbReference type="ChEBI" id="CHEBI:58017"/>
    </ligand>
</feature>
<feature type="binding site" evidence="1">
    <location>
        <begin position="130"/>
        <end position="138"/>
    </location>
    <ligand>
        <name>5-phospho-alpha-D-ribose 1-diphosphate</name>
        <dbReference type="ChEBI" id="CHEBI:58017"/>
    </ligand>
</feature>
<feature type="binding site" evidence="1">
    <location>
        <position position="193"/>
    </location>
    <ligand>
        <name>uracil</name>
        <dbReference type="ChEBI" id="CHEBI:17568"/>
    </ligand>
</feature>
<feature type="binding site" evidence="1">
    <location>
        <begin position="198"/>
        <end position="200"/>
    </location>
    <ligand>
        <name>uracil</name>
        <dbReference type="ChEBI" id="CHEBI:17568"/>
    </ligand>
</feature>
<feature type="binding site" evidence="1">
    <location>
        <position position="199"/>
    </location>
    <ligand>
        <name>5-phospho-alpha-D-ribose 1-diphosphate</name>
        <dbReference type="ChEBI" id="CHEBI:58017"/>
    </ligand>
</feature>
<dbReference type="EC" id="2.4.2.9" evidence="1"/>
<dbReference type="EMBL" id="CP000569">
    <property type="protein sequence ID" value="ABN73502.1"/>
    <property type="molecule type" value="Genomic_DNA"/>
</dbReference>
<dbReference type="RefSeq" id="WP_005596420.1">
    <property type="nucleotide sequence ID" value="NC_009053.1"/>
</dbReference>
<dbReference type="SMR" id="A3MZB6"/>
<dbReference type="STRING" id="416269.APL_0398"/>
<dbReference type="EnsemblBacteria" id="ABN73502">
    <property type="protein sequence ID" value="ABN73502"/>
    <property type="gene ID" value="APL_0398"/>
</dbReference>
<dbReference type="GeneID" id="48598564"/>
<dbReference type="KEGG" id="apl:APL_0398"/>
<dbReference type="eggNOG" id="COG0035">
    <property type="taxonomic scope" value="Bacteria"/>
</dbReference>
<dbReference type="HOGENOM" id="CLU_067096_2_2_6"/>
<dbReference type="UniPathway" id="UPA00574">
    <property type="reaction ID" value="UER00636"/>
</dbReference>
<dbReference type="Proteomes" id="UP000001432">
    <property type="component" value="Chromosome"/>
</dbReference>
<dbReference type="GO" id="GO:0005525">
    <property type="term" value="F:GTP binding"/>
    <property type="evidence" value="ECO:0007669"/>
    <property type="project" value="UniProtKB-KW"/>
</dbReference>
<dbReference type="GO" id="GO:0000287">
    <property type="term" value="F:magnesium ion binding"/>
    <property type="evidence" value="ECO:0007669"/>
    <property type="project" value="UniProtKB-UniRule"/>
</dbReference>
<dbReference type="GO" id="GO:0004845">
    <property type="term" value="F:uracil phosphoribosyltransferase activity"/>
    <property type="evidence" value="ECO:0007669"/>
    <property type="project" value="UniProtKB-UniRule"/>
</dbReference>
<dbReference type="GO" id="GO:0044206">
    <property type="term" value="P:UMP salvage"/>
    <property type="evidence" value="ECO:0007669"/>
    <property type="project" value="UniProtKB-UniRule"/>
</dbReference>
<dbReference type="GO" id="GO:0006223">
    <property type="term" value="P:uracil salvage"/>
    <property type="evidence" value="ECO:0007669"/>
    <property type="project" value="InterPro"/>
</dbReference>
<dbReference type="CDD" id="cd06223">
    <property type="entry name" value="PRTases_typeI"/>
    <property type="match status" value="1"/>
</dbReference>
<dbReference type="FunFam" id="3.40.50.2020:FF:000003">
    <property type="entry name" value="Uracil phosphoribosyltransferase"/>
    <property type="match status" value="1"/>
</dbReference>
<dbReference type="Gene3D" id="3.40.50.2020">
    <property type="match status" value="1"/>
</dbReference>
<dbReference type="HAMAP" id="MF_01218_B">
    <property type="entry name" value="Upp_B"/>
    <property type="match status" value="1"/>
</dbReference>
<dbReference type="InterPro" id="IPR000836">
    <property type="entry name" value="PRibTrfase_dom"/>
</dbReference>
<dbReference type="InterPro" id="IPR029057">
    <property type="entry name" value="PRTase-like"/>
</dbReference>
<dbReference type="InterPro" id="IPR034332">
    <property type="entry name" value="Upp_B"/>
</dbReference>
<dbReference type="InterPro" id="IPR050054">
    <property type="entry name" value="UPRTase/APRTase"/>
</dbReference>
<dbReference type="InterPro" id="IPR005765">
    <property type="entry name" value="Ura_phspho_trans"/>
</dbReference>
<dbReference type="NCBIfam" id="NF001097">
    <property type="entry name" value="PRK00129.1"/>
    <property type="match status" value="1"/>
</dbReference>
<dbReference type="NCBIfam" id="TIGR01091">
    <property type="entry name" value="upp"/>
    <property type="match status" value="1"/>
</dbReference>
<dbReference type="PANTHER" id="PTHR32315">
    <property type="entry name" value="ADENINE PHOSPHORIBOSYLTRANSFERASE"/>
    <property type="match status" value="1"/>
</dbReference>
<dbReference type="PANTHER" id="PTHR32315:SF4">
    <property type="entry name" value="URACIL PHOSPHORIBOSYLTRANSFERASE, CHLOROPLASTIC"/>
    <property type="match status" value="1"/>
</dbReference>
<dbReference type="Pfam" id="PF14681">
    <property type="entry name" value="UPRTase"/>
    <property type="match status" value="1"/>
</dbReference>
<dbReference type="SUPFAM" id="SSF53271">
    <property type="entry name" value="PRTase-like"/>
    <property type="match status" value="1"/>
</dbReference>
<accession>A3MZB6</accession>